<reference key="1">
    <citation type="journal article" date="2005" name="Genome Res.">
        <title>The Chlamydophila abortus genome sequence reveals an array of variable proteins that contribute to interspecies variation.</title>
        <authorList>
            <person name="Thomson N.R."/>
            <person name="Yeats C."/>
            <person name="Bell K."/>
            <person name="Holden M.T.G."/>
            <person name="Bentley S.D."/>
            <person name="Livingstone M."/>
            <person name="Cerdeno-Tarraga A.-M."/>
            <person name="Harris B."/>
            <person name="Doggett J."/>
            <person name="Ormond D."/>
            <person name="Mungall K."/>
            <person name="Clarke K."/>
            <person name="Feltwell T."/>
            <person name="Hance Z."/>
            <person name="Sanders M."/>
            <person name="Quail M.A."/>
            <person name="Price C."/>
            <person name="Barrell B.G."/>
            <person name="Parkhill J."/>
            <person name="Longbottom D."/>
        </authorList>
    </citation>
    <scope>NUCLEOTIDE SEQUENCE [LARGE SCALE GENOMIC DNA]</scope>
    <source>
        <strain>DSM 27085 / S26/3</strain>
    </source>
</reference>
<organism>
    <name type="scientific">Chlamydia abortus (strain DSM 27085 / S26/3)</name>
    <name type="common">Chlamydophila abortus</name>
    <dbReference type="NCBI Taxonomy" id="218497"/>
    <lineage>
        <taxon>Bacteria</taxon>
        <taxon>Pseudomonadati</taxon>
        <taxon>Chlamydiota</taxon>
        <taxon>Chlamydiia</taxon>
        <taxon>Chlamydiales</taxon>
        <taxon>Chlamydiaceae</taxon>
        <taxon>Chlamydia/Chlamydophila group</taxon>
        <taxon>Chlamydia</taxon>
    </lineage>
</organism>
<comment type="function">
    <text evidence="1">Binds 23S rRNA and is also seen to make contacts with the A and possibly P site tRNAs.</text>
</comment>
<comment type="subunit">
    <text evidence="1">Part of the 50S ribosomal subunit.</text>
</comment>
<comment type="similarity">
    <text evidence="1">Belongs to the universal ribosomal protein uL16 family.</text>
</comment>
<sequence length="137" mass="15731">MMPKRTKFRKQQKGQFAGLSKGATFVDFGEFGMQTLERGWVTSRQIEACRIAINRYLKRRGKVWIRIFPDKSVTKKPAETRMGKGKGAPDHWVAVVRPGRILFEVANVSREDAQDALRRAAAKLGIRTRFVKRVERV</sequence>
<keyword id="KW-0687">Ribonucleoprotein</keyword>
<keyword id="KW-0689">Ribosomal protein</keyword>
<keyword id="KW-0694">RNA-binding</keyword>
<keyword id="KW-0699">rRNA-binding</keyword>
<keyword id="KW-0820">tRNA-binding</keyword>
<name>RL16_CHLAB</name>
<proteinExistence type="inferred from homology"/>
<dbReference type="EMBL" id="CR848038">
    <property type="protein sequence ID" value="CAH63557.1"/>
    <property type="molecule type" value="Genomic_DNA"/>
</dbReference>
<dbReference type="SMR" id="Q5L713"/>
<dbReference type="KEGG" id="cab:CAB100"/>
<dbReference type="eggNOG" id="COG0197">
    <property type="taxonomic scope" value="Bacteria"/>
</dbReference>
<dbReference type="HOGENOM" id="CLU_078858_2_1_0"/>
<dbReference type="Proteomes" id="UP000001012">
    <property type="component" value="Chromosome"/>
</dbReference>
<dbReference type="GO" id="GO:0022625">
    <property type="term" value="C:cytosolic large ribosomal subunit"/>
    <property type="evidence" value="ECO:0007669"/>
    <property type="project" value="TreeGrafter"/>
</dbReference>
<dbReference type="GO" id="GO:0019843">
    <property type="term" value="F:rRNA binding"/>
    <property type="evidence" value="ECO:0007669"/>
    <property type="project" value="UniProtKB-UniRule"/>
</dbReference>
<dbReference type="GO" id="GO:0003735">
    <property type="term" value="F:structural constituent of ribosome"/>
    <property type="evidence" value="ECO:0007669"/>
    <property type="project" value="InterPro"/>
</dbReference>
<dbReference type="GO" id="GO:0000049">
    <property type="term" value="F:tRNA binding"/>
    <property type="evidence" value="ECO:0007669"/>
    <property type="project" value="UniProtKB-KW"/>
</dbReference>
<dbReference type="GO" id="GO:0006412">
    <property type="term" value="P:translation"/>
    <property type="evidence" value="ECO:0007669"/>
    <property type="project" value="UniProtKB-UniRule"/>
</dbReference>
<dbReference type="CDD" id="cd01433">
    <property type="entry name" value="Ribosomal_L16_L10e"/>
    <property type="match status" value="1"/>
</dbReference>
<dbReference type="FunFam" id="3.90.1170.10:FF:000001">
    <property type="entry name" value="50S ribosomal protein L16"/>
    <property type="match status" value="1"/>
</dbReference>
<dbReference type="Gene3D" id="3.90.1170.10">
    <property type="entry name" value="Ribosomal protein L10e/L16"/>
    <property type="match status" value="1"/>
</dbReference>
<dbReference type="HAMAP" id="MF_01342">
    <property type="entry name" value="Ribosomal_uL16"/>
    <property type="match status" value="1"/>
</dbReference>
<dbReference type="InterPro" id="IPR047873">
    <property type="entry name" value="Ribosomal_uL16"/>
</dbReference>
<dbReference type="InterPro" id="IPR000114">
    <property type="entry name" value="Ribosomal_uL16_bact-type"/>
</dbReference>
<dbReference type="InterPro" id="IPR020798">
    <property type="entry name" value="Ribosomal_uL16_CS"/>
</dbReference>
<dbReference type="InterPro" id="IPR016180">
    <property type="entry name" value="Ribosomal_uL16_dom"/>
</dbReference>
<dbReference type="InterPro" id="IPR036920">
    <property type="entry name" value="Ribosomal_uL16_sf"/>
</dbReference>
<dbReference type="NCBIfam" id="TIGR01164">
    <property type="entry name" value="rplP_bact"/>
    <property type="match status" value="1"/>
</dbReference>
<dbReference type="PANTHER" id="PTHR12220">
    <property type="entry name" value="50S/60S RIBOSOMAL PROTEIN L16"/>
    <property type="match status" value="1"/>
</dbReference>
<dbReference type="PANTHER" id="PTHR12220:SF13">
    <property type="entry name" value="LARGE RIBOSOMAL SUBUNIT PROTEIN UL16M"/>
    <property type="match status" value="1"/>
</dbReference>
<dbReference type="Pfam" id="PF00252">
    <property type="entry name" value="Ribosomal_L16"/>
    <property type="match status" value="1"/>
</dbReference>
<dbReference type="PRINTS" id="PR00060">
    <property type="entry name" value="RIBOSOMALL16"/>
</dbReference>
<dbReference type="SUPFAM" id="SSF54686">
    <property type="entry name" value="Ribosomal protein L16p/L10e"/>
    <property type="match status" value="1"/>
</dbReference>
<dbReference type="PROSITE" id="PS00586">
    <property type="entry name" value="RIBOSOMAL_L16_1"/>
    <property type="match status" value="1"/>
</dbReference>
<dbReference type="PROSITE" id="PS00701">
    <property type="entry name" value="RIBOSOMAL_L16_2"/>
    <property type="match status" value="1"/>
</dbReference>
<accession>Q5L713</accession>
<evidence type="ECO:0000255" key="1">
    <source>
        <dbReference type="HAMAP-Rule" id="MF_01342"/>
    </source>
</evidence>
<evidence type="ECO:0000305" key="2"/>
<feature type="chain" id="PRO_0000062077" description="Large ribosomal subunit protein uL16">
    <location>
        <begin position="1"/>
        <end position="137"/>
    </location>
</feature>
<protein>
    <recommendedName>
        <fullName evidence="1">Large ribosomal subunit protein uL16</fullName>
    </recommendedName>
    <alternativeName>
        <fullName evidence="2">50S ribosomal protein L16</fullName>
    </alternativeName>
</protein>
<gene>
    <name evidence="1" type="primary">rplP</name>
    <name type="ordered locus">CAB100</name>
</gene>